<protein>
    <recommendedName>
        <fullName evidence="1">tRNA1(Val) (adenine(37)-N6)-methyltransferase</fullName>
        <ecNumber evidence="1">2.1.1.223</ecNumber>
    </recommendedName>
    <alternativeName>
        <fullName evidence="1">tRNA m6A37 methyltransferase</fullName>
    </alternativeName>
</protein>
<accession>Q0I4T7</accession>
<name>TRMN6_HISS1</name>
<feature type="chain" id="PRO_0000387387" description="tRNA1(Val) (adenine(37)-N6)-methyltransferase">
    <location>
        <begin position="1"/>
        <end position="236"/>
    </location>
</feature>
<proteinExistence type="inferred from homology"/>
<comment type="function">
    <text evidence="1">Specifically methylates the adenine in position 37 of tRNA(1)(Val) (anticodon cmo5UAC).</text>
</comment>
<comment type="catalytic activity">
    <reaction evidence="1">
        <text>adenosine(37) in tRNA1(Val) + S-adenosyl-L-methionine = N(6)-methyladenosine(37) in tRNA1(Val) + S-adenosyl-L-homocysteine + H(+)</text>
        <dbReference type="Rhea" id="RHEA:43160"/>
        <dbReference type="Rhea" id="RHEA-COMP:10369"/>
        <dbReference type="Rhea" id="RHEA-COMP:10370"/>
        <dbReference type="ChEBI" id="CHEBI:15378"/>
        <dbReference type="ChEBI" id="CHEBI:57856"/>
        <dbReference type="ChEBI" id="CHEBI:59789"/>
        <dbReference type="ChEBI" id="CHEBI:74411"/>
        <dbReference type="ChEBI" id="CHEBI:74449"/>
        <dbReference type="EC" id="2.1.1.223"/>
    </reaction>
</comment>
<comment type="subcellular location">
    <subcellularLocation>
        <location evidence="1">Cytoplasm</location>
    </subcellularLocation>
</comment>
<comment type="similarity">
    <text evidence="1">Belongs to the methyltransferase superfamily. tRNA (adenine-N(6)-)-methyltransferase family.</text>
</comment>
<keyword id="KW-0963">Cytoplasm</keyword>
<keyword id="KW-0489">Methyltransferase</keyword>
<keyword id="KW-0949">S-adenosyl-L-methionine</keyword>
<keyword id="KW-0808">Transferase</keyword>
<keyword id="KW-0819">tRNA processing</keyword>
<organism>
    <name type="scientific">Histophilus somni (strain 129Pt)</name>
    <name type="common">Haemophilus somnus</name>
    <dbReference type="NCBI Taxonomy" id="205914"/>
    <lineage>
        <taxon>Bacteria</taxon>
        <taxon>Pseudomonadati</taxon>
        <taxon>Pseudomonadota</taxon>
        <taxon>Gammaproteobacteria</taxon>
        <taxon>Pasteurellales</taxon>
        <taxon>Pasteurellaceae</taxon>
        <taxon>Histophilus</taxon>
    </lineage>
</organism>
<reference key="1">
    <citation type="journal article" date="2007" name="J. Bacteriol.">
        <title>Complete genome sequence of Haemophilus somnus (Histophilus somni) strain 129Pt and comparison to Haemophilus ducreyi 35000HP and Haemophilus influenzae Rd.</title>
        <authorList>
            <person name="Challacombe J.F."/>
            <person name="Duncan A.J."/>
            <person name="Brettin T.S."/>
            <person name="Bruce D."/>
            <person name="Chertkov O."/>
            <person name="Detter J.C."/>
            <person name="Han C.S."/>
            <person name="Misra M."/>
            <person name="Richardson P."/>
            <person name="Tapia R."/>
            <person name="Thayer N."/>
            <person name="Xie G."/>
            <person name="Inzana T.J."/>
        </authorList>
    </citation>
    <scope>NUCLEOTIDE SEQUENCE [LARGE SCALE GENOMIC DNA]</scope>
    <source>
        <strain>129Pt</strain>
    </source>
</reference>
<gene>
    <name type="ordered locus">HS_1296</name>
</gene>
<evidence type="ECO:0000255" key="1">
    <source>
        <dbReference type="HAMAP-Rule" id="MF_01872"/>
    </source>
</evidence>
<dbReference type="EC" id="2.1.1.223" evidence="1"/>
<dbReference type="EMBL" id="CP000436">
    <property type="protein sequence ID" value="ABI25571.1"/>
    <property type="molecule type" value="Genomic_DNA"/>
</dbReference>
<dbReference type="SMR" id="Q0I4T7"/>
<dbReference type="KEGG" id="hso:HS_1296"/>
<dbReference type="eggNOG" id="COG4123">
    <property type="taxonomic scope" value="Bacteria"/>
</dbReference>
<dbReference type="HOGENOM" id="CLU_061983_0_0_6"/>
<dbReference type="GO" id="GO:0005737">
    <property type="term" value="C:cytoplasm"/>
    <property type="evidence" value="ECO:0007669"/>
    <property type="project" value="UniProtKB-SubCell"/>
</dbReference>
<dbReference type="GO" id="GO:0016430">
    <property type="term" value="F:tRNA (adenine-N6)-methyltransferase activity"/>
    <property type="evidence" value="ECO:0007669"/>
    <property type="project" value="UniProtKB-UniRule"/>
</dbReference>
<dbReference type="GO" id="GO:0032259">
    <property type="term" value="P:methylation"/>
    <property type="evidence" value="ECO:0007669"/>
    <property type="project" value="UniProtKB-KW"/>
</dbReference>
<dbReference type="GO" id="GO:0008033">
    <property type="term" value="P:tRNA processing"/>
    <property type="evidence" value="ECO:0007669"/>
    <property type="project" value="UniProtKB-UniRule"/>
</dbReference>
<dbReference type="CDD" id="cd02440">
    <property type="entry name" value="AdoMet_MTases"/>
    <property type="match status" value="1"/>
</dbReference>
<dbReference type="Gene3D" id="3.40.50.150">
    <property type="entry name" value="Vaccinia Virus protein VP39"/>
    <property type="match status" value="1"/>
</dbReference>
<dbReference type="HAMAP" id="MF_01872">
    <property type="entry name" value="tRNA_methyltr_YfiC"/>
    <property type="match status" value="1"/>
</dbReference>
<dbReference type="InterPro" id="IPR029063">
    <property type="entry name" value="SAM-dependent_MTases_sf"/>
</dbReference>
<dbReference type="InterPro" id="IPR007848">
    <property type="entry name" value="Small_mtfrase_dom"/>
</dbReference>
<dbReference type="InterPro" id="IPR050210">
    <property type="entry name" value="tRNA_Adenine-N(6)_MTase"/>
</dbReference>
<dbReference type="InterPro" id="IPR022882">
    <property type="entry name" value="tRNA_adenine-N6_MeTrfase"/>
</dbReference>
<dbReference type="PANTHER" id="PTHR47739">
    <property type="entry name" value="TRNA1(VAL) (ADENINE(37)-N6)-METHYLTRANSFERASE"/>
    <property type="match status" value="1"/>
</dbReference>
<dbReference type="PANTHER" id="PTHR47739:SF1">
    <property type="entry name" value="TRNA1(VAL) (ADENINE(37)-N6)-METHYLTRANSFERASE"/>
    <property type="match status" value="1"/>
</dbReference>
<dbReference type="Pfam" id="PF05175">
    <property type="entry name" value="MTS"/>
    <property type="match status" value="1"/>
</dbReference>
<dbReference type="SUPFAM" id="SSF53335">
    <property type="entry name" value="S-adenosyl-L-methionine-dependent methyltransferases"/>
    <property type="match status" value="1"/>
</dbReference>
<sequence length="236" mass="27019">MAKKQEFTFKQFHINQDQCAMKVGTDGILLGAWANINQANTLLDLGTGTGLIALMLAQRSPEHCHISAVELDPQAYLQAKDNIQQSPWANKIKIFQQDIIVFAQDCEHKFDVITANPPYFKQGIDCASKQRNLARYTLTQSHLDWLNAAEKLLNLTGEIHLILPFEEGKSLQKKCGLFCIRECKIITKAGKTPQRLLLSFSREERKCEESQLVIYDRNNQYSTEFKTLTQDFYLNF</sequence>